<feature type="chain" id="PRO_0000312547" description="LL-diaminopimelate aminotransferase">
    <location>
        <begin position="1"/>
        <end position="408"/>
    </location>
</feature>
<feature type="binding site" evidence="1">
    <location>
        <position position="15"/>
    </location>
    <ligand>
        <name>substrate</name>
    </ligand>
</feature>
<feature type="binding site" evidence="1">
    <location>
        <position position="42"/>
    </location>
    <ligand>
        <name>substrate</name>
    </ligand>
</feature>
<feature type="binding site" evidence="1">
    <location>
        <position position="72"/>
    </location>
    <ligand>
        <name>pyridoxal 5'-phosphate</name>
        <dbReference type="ChEBI" id="CHEBI:597326"/>
    </ligand>
</feature>
<feature type="binding site" evidence="1">
    <location>
        <begin position="108"/>
        <end position="109"/>
    </location>
    <ligand>
        <name>pyridoxal 5'-phosphate</name>
        <dbReference type="ChEBI" id="CHEBI:597326"/>
    </ligand>
</feature>
<feature type="binding site" evidence="1">
    <location>
        <position position="109"/>
    </location>
    <ligand>
        <name>substrate</name>
    </ligand>
</feature>
<feature type="binding site" evidence="1">
    <location>
        <position position="132"/>
    </location>
    <ligand>
        <name>pyridoxal 5'-phosphate</name>
        <dbReference type="ChEBI" id="CHEBI:597326"/>
    </ligand>
</feature>
<feature type="binding site" evidence="1">
    <location>
        <position position="132"/>
    </location>
    <ligand>
        <name>substrate</name>
    </ligand>
</feature>
<feature type="binding site" evidence="1">
    <location>
        <position position="187"/>
    </location>
    <ligand>
        <name>pyridoxal 5'-phosphate</name>
        <dbReference type="ChEBI" id="CHEBI:597326"/>
    </ligand>
</feature>
<feature type="binding site" evidence="1">
    <location>
        <position position="187"/>
    </location>
    <ligand>
        <name>substrate</name>
    </ligand>
</feature>
<feature type="binding site" evidence="1">
    <location>
        <position position="218"/>
    </location>
    <ligand>
        <name>pyridoxal 5'-phosphate</name>
        <dbReference type="ChEBI" id="CHEBI:597326"/>
    </ligand>
</feature>
<feature type="binding site" evidence="1">
    <location>
        <begin position="246"/>
        <end position="248"/>
    </location>
    <ligand>
        <name>pyridoxal 5'-phosphate</name>
        <dbReference type="ChEBI" id="CHEBI:597326"/>
    </ligand>
</feature>
<feature type="binding site" evidence="1">
    <location>
        <position position="257"/>
    </location>
    <ligand>
        <name>pyridoxal 5'-phosphate</name>
        <dbReference type="ChEBI" id="CHEBI:597326"/>
    </ligand>
</feature>
<feature type="binding site" evidence="1">
    <location>
        <position position="292"/>
    </location>
    <ligand>
        <name>pyridoxal 5'-phosphate</name>
        <dbReference type="ChEBI" id="CHEBI:597326"/>
    </ligand>
</feature>
<feature type="binding site" evidence="1">
    <location>
        <position position="292"/>
    </location>
    <ligand>
        <name>substrate</name>
    </ligand>
</feature>
<feature type="binding site" evidence="1">
    <location>
        <position position="388"/>
    </location>
    <ligand>
        <name>substrate</name>
    </ligand>
</feature>
<feature type="modified residue" description="N6-(pyridoxal phosphate)lysine" evidence="1">
    <location>
        <position position="249"/>
    </location>
</feature>
<name>DAPAT_SYNS9</name>
<sequence length="408" mass="44315">MVKVNGNYLKLKAGYLFPEIGRRVKAFSAANPEAALIRLGIGDVTEPLPLACREAMKTAIDAMGTAEGFHGYGPEQGYAWLREAIAQQDFQSRGCEINADEIFVSDGSKCDSSNILDILGEGNRVAVTDPVYPVYVDSNVMAGRTGDAGAEGRYAGLTYLPISADNNFSAEIPSEPVDLIYLCFPNNPTGAVATRAQLKAWVDYARSHNALILFDAAYEAFIQDPEIPHSIFEIEGARECAIEFRSFSKNAGFTGTRCAFTVVPKGLKGTAANGELVELWGLWNRRQSTKFNGVSYIIQRGAEAVYSTAGQAEVKTLVSFYMENASIIRQELTSLGLQIYGGEHAPYVWIKTPNGMDSWGFFDHLLNKANVVGTPGSGFGAAGEGYFRLSAFNSRKNVNEAMARIKSL</sequence>
<evidence type="ECO:0000255" key="1">
    <source>
        <dbReference type="HAMAP-Rule" id="MF_01642"/>
    </source>
</evidence>
<accession>Q3AW44</accession>
<dbReference type="EC" id="2.6.1.83" evidence="1"/>
<dbReference type="EMBL" id="CP000097">
    <property type="protein sequence ID" value="ABB26989.1"/>
    <property type="molecule type" value="Genomic_DNA"/>
</dbReference>
<dbReference type="RefSeq" id="WP_011360778.1">
    <property type="nucleotide sequence ID" value="NC_007513.1"/>
</dbReference>
<dbReference type="SMR" id="Q3AW44"/>
<dbReference type="STRING" id="316279.Syncc9902_2031"/>
<dbReference type="KEGG" id="sye:Syncc9902_2031"/>
<dbReference type="eggNOG" id="COG0436">
    <property type="taxonomic scope" value="Bacteria"/>
</dbReference>
<dbReference type="HOGENOM" id="CLU_051433_0_0_3"/>
<dbReference type="OrthoDB" id="9802328at2"/>
<dbReference type="UniPathway" id="UPA00034">
    <property type="reaction ID" value="UER00466"/>
</dbReference>
<dbReference type="Proteomes" id="UP000002712">
    <property type="component" value="Chromosome"/>
</dbReference>
<dbReference type="GO" id="GO:0010285">
    <property type="term" value="F:L,L-diaminopimelate aminotransferase activity"/>
    <property type="evidence" value="ECO:0007669"/>
    <property type="project" value="UniProtKB-UniRule"/>
</dbReference>
<dbReference type="GO" id="GO:0030170">
    <property type="term" value="F:pyridoxal phosphate binding"/>
    <property type="evidence" value="ECO:0007669"/>
    <property type="project" value="UniProtKB-UniRule"/>
</dbReference>
<dbReference type="GO" id="GO:0033362">
    <property type="term" value="P:lysine biosynthetic process via diaminopimelate, diaminopimelate-aminotransferase pathway"/>
    <property type="evidence" value="ECO:0007669"/>
    <property type="project" value="UniProtKB-UniRule"/>
</dbReference>
<dbReference type="CDD" id="cd00609">
    <property type="entry name" value="AAT_like"/>
    <property type="match status" value="1"/>
</dbReference>
<dbReference type="FunFam" id="3.40.640.10:FF:000099">
    <property type="entry name" value="LL-diaminopimelate aminotransferase, chloroplastic"/>
    <property type="match status" value="1"/>
</dbReference>
<dbReference type="Gene3D" id="3.90.1150.10">
    <property type="entry name" value="Aspartate Aminotransferase, domain 1"/>
    <property type="match status" value="1"/>
</dbReference>
<dbReference type="Gene3D" id="3.40.640.10">
    <property type="entry name" value="Type I PLP-dependent aspartate aminotransferase-like (Major domain)"/>
    <property type="match status" value="1"/>
</dbReference>
<dbReference type="HAMAP" id="MF_01642">
    <property type="entry name" value="DapL_aminotrans_1"/>
    <property type="match status" value="1"/>
</dbReference>
<dbReference type="InterPro" id="IPR004839">
    <property type="entry name" value="Aminotransferase_I/II_large"/>
</dbReference>
<dbReference type="InterPro" id="IPR019942">
    <property type="entry name" value="DapL/ALD1"/>
</dbReference>
<dbReference type="InterPro" id="IPR015424">
    <property type="entry name" value="PyrdxlP-dep_Trfase"/>
</dbReference>
<dbReference type="InterPro" id="IPR015421">
    <property type="entry name" value="PyrdxlP-dep_Trfase_major"/>
</dbReference>
<dbReference type="InterPro" id="IPR015422">
    <property type="entry name" value="PyrdxlP-dep_Trfase_small"/>
</dbReference>
<dbReference type="NCBIfam" id="TIGR03542">
    <property type="entry name" value="DAPAT_plant"/>
    <property type="match status" value="1"/>
</dbReference>
<dbReference type="PANTHER" id="PTHR43144">
    <property type="entry name" value="AMINOTRANSFERASE"/>
    <property type="match status" value="1"/>
</dbReference>
<dbReference type="Pfam" id="PF00155">
    <property type="entry name" value="Aminotran_1_2"/>
    <property type="match status" value="1"/>
</dbReference>
<dbReference type="SUPFAM" id="SSF53383">
    <property type="entry name" value="PLP-dependent transferases"/>
    <property type="match status" value="1"/>
</dbReference>
<organism>
    <name type="scientific">Synechococcus sp. (strain CC9902)</name>
    <dbReference type="NCBI Taxonomy" id="316279"/>
    <lineage>
        <taxon>Bacteria</taxon>
        <taxon>Bacillati</taxon>
        <taxon>Cyanobacteriota</taxon>
        <taxon>Cyanophyceae</taxon>
        <taxon>Synechococcales</taxon>
        <taxon>Synechococcaceae</taxon>
        <taxon>Synechococcus</taxon>
    </lineage>
</organism>
<comment type="function">
    <text evidence="1">Involved in the synthesis of meso-diaminopimelate (m-DAP or DL-DAP), required for both lysine and peptidoglycan biosynthesis. Catalyzes the direct conversion of tetrahydrodipicolinate to LL-diaminopimelate.</text>
</comment>
<comment type="catalytic activity">
    <reaction evidence="1">
        <text>(2S,6S)-2,6-diaminopimelate + 2-oxoglutarate = (S)-2,3,4,5-tetrahydrodipicolinate + L-glutamate + H2O + H(+)</text>
        <dbReference type="Rhea" id="RHEA:23988"/>
        <dbReference type="ChEBI" id="CHEBI:15377"/>
        <dbReference type="ChEBI" id="CHEBI:15378"/>
        <dbReference type="ChEBI" id="CHEBI:16810"/>
        <dbReference type="ChEBI" id="CHEBI:16845"/>
        <dbReference type="ChEBI" id="CHEBI:29985"/>
        <dbReference type="ChEBI" id="CHEBI:57609"/>
        <dbReference type="EC" id="2.6.1.83"/>
    </reaction>
</comment>
<comment type="cofactor">
    <cofactor evidence="1">
        <name>pyridoxal 5'-phosphate</name>
        <dbReference type="ChEBI" id="CHEBI:597326"/>
    </cofactor>
</comment>
<comment type="pathway">
    <text evidence="1">Amino-acid biosynthesis; L-lysine biosynthesis via DAP pathway; LL-2,6-diaminopimelate from (S)-tetrahydrodipicolinate (aminotransferase route): step 1/1.</text>
</comment>
<comment type="subunit">
    <text evidence="1">Homodimer.</text>
</comment>
<comment type="similarity">
    <text evidence="1">Belongs to the class-I pyridoxal-phosphate-dependent aminotransferase family. LL-diaminopimelate aminotransferase subfamily.</text>
</comment>
<reference key="1">
    <citation type="submission" date="2005-08" db="EMBL/GenBank/DDBJ databases">
        <title>Complete sequence of Synechococcus sp. CC9902.</title>
        <authorList>
            <person name="Copeland A."/>
            <person name="Lucas S."/>
            <person name="Lapidus A."/>
            <person name="Barry K."/>
            <person name="Detter J.C."/>
            <person name="Glavina T."/>
            <person name="Hammon N."/>
            <person name="Israni S."/>
            <person name="Pitluck S."/>
            <person name="Martinez M."/>
            <person name="Schmutz J."/>
            <person name="Larimer F."/>
            <person name="Land M."/>
            <person name="Kyrpides N."/>
            <person name="Ivanova N."/>
            <person name="Richardson P."/>
        </authorList>
    </citation>
    <scope>NUCLEOTIDE SEQUENCE [LARGE SCALE GENOMIC DNA]</scope>
    <source>
        <strain>CC9902</strain>
    </source>
</reference>
<protein>
    <recommendedName>
        <fullName evidence="1">LL-diaminopimelate aminotransferase</fullName>
        <shortName evidence="1">DAP-AT</shortName>
        <shortName evidence="1">DAP-aminotransferase</shortName>
        <shortName evidence="1">LL-DAP-aminotransferase</shortName>
        <ecNumber evidence="1">2.6.1.83</ecNumber>
    </recommendedName>
</protein>
<gene>
    <name evidence="1" type="primary">dapL</name>
    <name type="ordered locus">Syncc9902_2031</name>
</gene>
<keyword id="KW-0032">Aminotransferase</keyword>
<keyword id="KW-0663">Pyridoxal phosphate</keyword>
<keyword id="KW-1185">Reference proteome</keyword>
<keyword id="KW-0808">Transferase</keyword>
<proteinExistence type="inferred from homology"/>